<reference key="1">
    <citation type="journal article" date="2005" name="J. Bacteriol.">
        <title>Insights on evolution of virulence and resistance from the complete genome analysis of an early methicillin-resistant Staphylococcus aureus strain and a biofilm-producing methicillin-resistant Staphylococcus epidermidis strain.</title>
        <authorList>
            <person name="Gill S.R."/>
            <person name="Fouts D.E."/>
            <person name="Archer G.L."/>
            <person name="Mongodin E.F."/>
            <person name="DeBoy R.T."/>
            <person name="Ravel J."/>
            <person name="Paulsen I.T."/>
            <person name="Kolonay J.F."/>
            <person name="Brinkac L.M."/>
            <person name="Beanan M.J."/>
            <person name="Dodson R.J."/>
            <person name="Daugherty S.C."/>
            <person name="Madupu R."/>
            <person name="Angiuoli S.V."/>
            <person name="Durkin A.S."/>
            <person name="Haft D.H."/>
            <person name="Vamathevan J.J."/>
            <person name="Khouri H."/>
            <person name="Utterback T.R."/>
            <person name="Lee C."/>
            <person name="Dimitrov G."/>
            <person name="Jiang L."/>
            <person name="Qin H."/>
            <person name="Weidman J."/>
            <person name="Tran K."/>
            <person name="Kang K.H."/>
            <person name="Hance I.R."/>
            <person name="Nelson K.E."/>
            <person name="Fraser C.M."/>
        </authorList>
    </citation>
    <scope>NUCLEOTIDE SEQUENCE [LARGE SCALE GENOMIC DNA]</scope>
    <source>
        <strain>ATCC 35984 / DSM 28319 / BCRC 17069 / CCUG 31568 / BM 3577 / RP62A</strain>
    </source>
</reference>
<proteinExistence type="inferred from homology"/>
<name>CYSH_STAEQ</name>
<sequence>MSIERITYDNFQNDPFINELDINDETKGAYEILKWAYQTYENDIVYSCSFGAESMVLIDLISQIKPDAQIVFLDTDLHFQETYDLIDRVKDKYPQLRIKMKKPELTLEEQGEKYNPALWKNDPNQCCYIRKIKPLEDVLSGAVAWISGLRRAQSPTRAHTNFINKDERFKSIKVCPLIYWTEEEVWSYIRDKDLPYNELHDQNYPSIGCIPCTSPVFDSNDSRAGRWSNSSKTECGLHVTDKP</sequence>
<protein>
    <recommendedName>
        <fullName evidence="1">Adenosine 5'-phosphosulfate reductase</fullName>
        <shortName evidence="1">APS reductase</shortName>
        <ecNumber evidence="1">1.8.4.10</ecNumber>
    </recommendedName>
    <alternativeName>
        <fullName evidence="1">5'-adenylylsulfate reductase</fullName>
    </alternativeName>
    <alternativeName>
        <fullName evidence="1">Thioredoxin-dependent 5'-adenylylsulfate reductase</fullName>
    </alternativeName>
</protein>
<dbReference type="EC" id="1.8.4.10" evidence="1"/>
<dbReference type="EMBL" id="CP000029">
    <property type="protein sequence ID" value="AAW53010.1"/>
    <property type="molecule type" value="Genomic_DNA"/>
</dbReference>
<dbReference type="RefSeq" id="WP_010959306.1">
    <property type="nucleotide sequence ID" value="NC_002976.3"/>
</dbReference>
<dbReference type="SMR" id="Q5HKZ5"/>
<dbReference type="STRING" id="176279.SERP2192"/>
<dbReference type="KEGG" id="ser:SERP2192"/>
<dbReference type="eggNOG" id="COG0175">
    <property type="taxonomic scope" value="Bacteria"/>
</dbReference>
<dbReference type="HOGENOM" id="CLU_044089_2_1_9"/>
<dbReference type="Proteomes" id="UP000000531">
    <property type="component" value="Chromosome"/>
</dbReference>
<dbReference type="GO" id="GO:0005737">
    <property type="term" value="C:cytoplasm"/>
    <property type="evidence" value="ECO:0007669"/>
    <property type="project" value="UniProtKB-SubCell"/>
</dbReference>
<dbReference type="GO" id="GO:0051539">
    <property type="term" value="F:4 iron, 4 sulfur cluster binding"/>
    <property type="evidence" value="ECO:0007669"/>
    <property type="project" value="UniProtKB-UniRule"/>
</dbReference>
<dbReference type="GO" id="GO:0043866">
    <property type="term" value="F:adenylyl-sulfate reductase (thioredoxin) activity"/>
    <property type="evidence" value="ECO:0007669"/>
    <property type="project" value="UniProtKB-EC"/>
</dbReference>
<dbReference type="GO" id="GO:0046872">
    <property type="term" value="F:metal ion binding"/>
    <property type="evidence" value="ECO:0007669"/>
    <property type="project" value="UniProtKB-KW"/>
</dbReference>
<dbReference type="GO" id="GO:0004604">
    <property type="term" value="F:phosphoadenylyl-sulfate reductase (thioredoxin) activity"/>
    <property type="evidence" value="ECO:0007669"/>
    <property type="project" value="UniProtKB-UniRule"/>
</dbReference>
<dbReference type="GO" id="GO:0019344">
    <property type="term" value="P:cysteine biosynthetic process"/>
    <property type="evidence" value="ECO:0007669"/>
    <property type="project" value="InterPro"/>
</dbReference>
<dbReference type="GO" id="GO:0070814">
    <property type="term" value="P:hydrogen sulfide biosynthetic process"/>
    <property type="evidence" value="ECO:0007669"/>
    <property type="project" value="UniProtKB-UniRule"/>
</dbReference>
<dbReference type="GO" id="GO:0019379">
    <property type="term" value="P:sulfate assimilation, phosphoadenylyl sulfate reduction by phosphoadenylyl-sulfate reductase (thioredoxin)"/>
    <property type="evidence" value="ECO:0007669"/>
    <property type="project" value="UniProtKB-UniRule"/>
</dbReference>
<dbReference type="CDD" id="cd23945">
    <property type="entry name" value="PAPS_reductase"/>
    <property type="match status" value="1"/>
</dbReference>
<dbReference type="FunFam" id="3.40.50.620:FF:000095">
    <property type="entry name" value="Phosphoadenosine phosphosulfate reductase"/>
    <property type="match status" value="1"/>
</dbReference>
<dbReference type="Gene3D" id="3.40.50.620">
    <property type="entry name" value="HUPs"/>
    <property type="match status" value="1"/>
</dbReference>
<dbReference type="HAMAP" id="MF_00063">
    <property type="entry name" value="CysH"/>
    <property type="match status" value="1"/>
</dbReference>
<dbReference type="InterPro" id="IPR011798">
    <property type="entry name" value="APS_reductase"/>
</dbReference>
<dbReference type="InterPro" id="IPR004511">
    <property type="entry name" value="PAPS/APS_Rdtase"/>
</dbReference>
<dbReference type="InterPro" id="IPR002500">
    <property type="entry name" value="PAPS_reduct_dom"/>
</dbReference>
<dbReference type="InterPro" id="IPR014729">
    <property type="entry name" value="Rossmann-like_a/b/a_fold"/>
</dbReference>
<dbReference type="NCBIfam" id="TIGR02055">
    <property type="entry name" value="APS_reductase"/>
    <property type="match status" value="1"/>
</dbReference>
<dbReference type="NCBIfam" id="TIGR00434">
    <property type="entry name" value="cysH"/>
    <property type="match status" value="1"/>
</dbReference>
<dbReference type="NCBIfam" id="NF002537">
    <property type="entry name" value="PRK02090.1"/>
    <property type="match status" value="1"/>
</dbReference>
<dbReference type="PANTHER" id="PTHR46509">
    <property type="entry name" value="PHOSPHOADENOSINE PHOSPHOSULFATE REDUCTASE"/>
    <property type="match status" value="1"/>
</dbReference>
<dbReference type="PANTHER" id="PTHR46509:SF1">
    <property type="entry name" value="PHOSPHOADENOSINE PHOSPHOSULFATE REDUCTASE"/>
    <property type="match status" value="1"/>
</dbReference>
<dbReference type="Pfam" id="PF01507">
    <property type="entry name" value="PAPS_reduct"/>
    <property type="match status" value="1"/>
</dbReference>
<dbReference type="PIRSF" id="PIRSF000857">
    <property type="entry name" value="PAPS_reductase"/>
    <property type="match status" value="1"/>
</dbReference>
<dbReference type="SUPFAM" id="SSF52402">
    <property type="entry name" value="Adenine nucleotide alpha hydrolases-like"/>
    <property type="match status" value="1"/>
</dbReference>
<accession>Q5HKZ5</accession>
<keyword id="KW-0963">Cytoplasm</keyword>
<keyword id="KW-0408">Iron</keyword>
<keyword id="KW-0411">Iron-sulfur</keyword>
<keyword id="KW-0479">Metal-binding</keyword>
<keyword id="KW-0560">Oxidoreductase</keyword>
<keyword id="KW-1185">Reference proteome</keyword>
<evidence type="ECO:0000255" key="1">
    <source>
        <dbReference type="HAMAP-Rule" id="MF_00063"/>
    </source>
</evidence>
<feature type="chain" id="PRO_0000100647" description="Adenosine 5'-phosphosulfate reductase">
    <location>
        <begin position="1"/>
        <end position="243"/>
    </location>
</feature>
<feature type="active site" description="Nucleophile; cysteine thiosulfonate intermediate" evidence="1">
    <location>
        <position position="235"/>
    </location>
</feature>
<feature type="binding site" evidence="1">
    <location>
        <position position="126"/>
    </location>
    <ligand>
        <name>[4Fe-4S] cluster</name>
        <dbReference type="ChEBI" id="CHEBI:49883"/>
    </ligand>
</feature>
<feature type="binding site" evidence="1">
    <location>
        <position position="127"/>
    </location>
    <ligand>
        <name>[4Fe-4S] cluster</name>
        <dbReference type="ChEBI" id="CHEBI:49883"/>
    </ligand>
</feature>
<feature type="binding site" evidence="1">
    <location>
        <position position="209"/>
    </location>
    <ligand>
        <name>[4Fe-4S] cluster</name>
        <dbReference type="ChEBI" id="CHEBI:49883"/>
    </ligand>
</feature>
<feature type="binding site" evidence="1">
    <location>
        <position position="212"/>
    </location>
    <ligand>
        <name>[4Fe-4S] cluster</name>
        <dbReference type="ChEBI" id="CHEBI:49883"/>
    </ligand>
</feature>
<comment type="function">
    <text evidence="1">Catalyzes the formation of sulfite from adenosine 5'-phosphosulfate (APS) using thioredoxin as an electron donor.</text>
</comment>
<comment type="catalytic activity">
    <reaction evidence="1">
        <text>[thioredoxin]-disulfide + sulfite + AMP + 2 H(+) = adenosine 5'-phosphosulfate + [thioredoxin]-dithiol</text>
        <dbReference type="Rhea" id="RHEA:21976"/>
        <dbReference type="Rhea" id="RHEA-COMP:10698"/>
        <dbReference type="Rhea" id="RHEA-COMP:10700"/>
        <dbReference type="ChEBI" id="CHEBI:15378"/>
        <dbReference type="ChEBI" id="CHEBI:17359"/>
        <dbReference type="ChEBI" id="CHEBI:29950"/>
        <dbReference type="ChEBI" id="CHEBI:50058"/>
        <dbReference type="ChEBI" id="CHEBI:58243"/>
        <dbReference type="ChEBI" id="CHEBI:456215"/>
        <dbReference type="EC" id="1.8.4.10"/>
    </reaction>
</comment>
<comment type="cofactor">
    <cofactor evidence="1">
        <name>[4Fe-4S] cluster</name>
        <dbReference type="ChEBI" id="CHEBI:49883"/>
    </cofactor>
    <text evidence="1">Binds 1 [4Fe-4S] cluster per subunit.</text>
</comment>
<comment type="pathway">
    <text evidence="1">Sulfur metabolism; hydrogen sulfide biosynthesis; sulfite from sulfate.</text>
</comment>
<comment type="subcellular location">
    <subcellularLocation>
        <location evidence="1">Cytoplasm</location>
    </subcellularLocation>
</comment>
<comment type="similarity">
    <text evidence="1">Belongs to the PAPS reductase family. CysH subfamily.</text>
</comment>
<organism>
    <name type="scientific">Staphylococcus epidermidis (strain ATCC 35984 / DSM 28319 / BCRC 17069 / CCUG 31568 / BM 3577 / RP62A)</name>
    <dbReference type="NCBI Taxonomy" id="176279"/>
    <lineage>
        <taxon>Bacteria</taxon>
        <taxon>Bacillati</taxon>
        <taxon>Bacillota</taxon>
        <taxon>Bacilli</taxon>
        <taxon>Bacillales</taxon>
        <taxon>Staphylococcaceae</taxon>
        <taxon>Staphylococcus</taxon>
    </lineage>
</organism>
<gene>
    <name evidence="1" type="primary">cysH</name>
    <name type="ordered locus">SERP2192</name>
</gene>